<comment type="function">
    <text evidence="5">Part of a potassium transport system. Required for the activity of the TrkH and TrkI transport systems.</text>
</comment>
<comment type="subcellular location">
    <subcellularLocation>
        <location evidence="1">Cell inner membrane</location>
        <topology evidence="1">Peripheral membrane protein</topology>
        <orientation evidence="1">Cytoplasmic side</orientation>
    </subcellularLocation>
</comment>
<comment type="domain">
    <text evidence="1">The RCK N-terminal domain binds NAD and possibly other effectors. This is expected to cause a conformation change that regulates potassium transport (By similarity).</text>
</comment>
<comment type="disruption phenotype">
    <text evidence="5">Deletion abolishes any K(+) uptake activity via TkrH and TkrI.</text>
</comment>
<gene>
    <name type="primary">trkA</name>
    <name type="ordered locus">HELO_1372</name>
</gene>
<keyword id="KW-0997">Cell inner membrane</keyword>
<keyword id="KW-1003">Cell membrane</keyword>
<keyword id="KW-0406">Ion transport</keyword>
<keyword id="KW-0472">Membrane</keyword>
<keyword id="KW-0520">NAD</keyword>
<keyword id="KW-0630">Potassium</keyword>
<keyword id="KW-0633">Potassium transport</keyword>
<keyword id="KW-0677">Repeat</keyword>
<keyword id="KW-0813">Transport</keyword>
<sequence length="457" mass="50420">MKIIILGAGQVGGTLAEHLAREENDITVVDTDADRLRELHTRLDIRTVAGAGSYPMVLRQAGCEDADMLIAVTNTDEVNMIACQVAHTLFRTPTKIARVRATAYLTRKGLFAHEAVPIDVLISPEQVVTDHIRRLIEHPGALQVLEFTGGLVQLVAVKAYYGGPLVGQELGFLRRHMPSVDTRVAAIYRRNRPIIPRGDTVIEADDEVFFIAARRDIRAVMSELRRLERDFRRVVIVGGGNIGERLAEHLEHSHQVKIVEHNLERCTQLSERLDRTVVLHGSATSKRLLEEENIEDCDIFCALTNDDEVNIMSSMLAKRMGAKKVLTLINNAAYVDLVQGGEIDIAISPQQATIGSLLTHVRRGDIVNVHSLRRGAAEAIEAIAHGDTQSSKVVGRAIGDIDLPSGTTIGAVVRGKEVLIAHDDVVVESGDHVILFVIDKRRIRDVERLFQVGLTFF</sequence>
<reference key="1">
    <citation type="journal article" date="2005" name="J. Bacteriol.">
        <title>Potassium transport in a halophilic member of the bacteria domain: identification and characterization of the K+ uptake systems TrkH and TrkI from Halomonas elongata DSM 2581T.</title>
        <authorList>
            <person name="Kraegeloh A."/>
            <person name="Amendt B."/>
            <person name="Kunte H.J."/>
        </authorList>
    </citation>
    <scope>NUCLEOTIDE SEQUENCE [GENOMIC DNA]</scope>
    <scope>FUNCTION</scope>
    <scope>DISRUPTION PHENOTYPE</scope>
    <scope>GENE NAME</scope>
    <source>
        <strain>ATCC 33173 / DSM 2581 / NBRC 15536 / NCIMB 2198 / 1H9</strain>
    </source>
</reference>
<reference key="2">
    <citation type="journal article" date="2011" name="Environ. Microbiol.">
        <title>A blueprint of ectoine metabolism from the genome of the industrial producer Halomonas elongata DSM 2581(T).</title>
        <authorList>
            <person name="Schwibbert K."/>
            <person name="Marin-Sanguino A."/>
            <person name="Bagyan I."/>
            <person name="Heidrich G."/>
            <person name="Lentzen G."/>
            <person name="Seitz H."/>
            <person name="Rampp M."/>
            <person name="Schuster S.C."/>
            <person name="Klenk H.P."/>
            <person name="Pfeiffer F."/>
            <person name="Oesterhelt D."/>
            <person name="Kunte H.J."/>
        </authorList>
    </citation>
    <scope>NUCLEOTIDE SEQUENCE [LARGE SCALE GENOMIC DNA]</scope>
    <source>
        <strain>ATCC 33173 / DSM 2581 / NBRC 15536 / NCIMB 2198 / 1H9</strain>
    </source>
</reference>
<protein>
    <recommendedName>
        <fullName>Trk system potassium uptake protein TrkA</fullName>
        <shortName>K(+)-uptake protein TrkA</shortName>
    </recommendedName>
</protein>
<evidence type="ECO:0000250" key="1"/>
<evidence type="ECO:0000255" key="2"/>
<evidence type="ECO:0000255" key="3">
    <source>
        <dbReference type="PROSITE-ProRule" id="PRU00543"/>
    </source>
</evidence>
<evidence type="ECO:0000255" key="4">
    <source>
        <dbReference type="PROSITE-ProRule" id="PRU00544"/>
    </source>
</evidence>
<evidence type="ECO:0000269" key="5">
    <source>
    </source>
</evidence>
<organism>
    <name type="scientific">Halomonas elongata (strain ATCC 33173 / DSM 2581 / NBRC 15536 / NCIMB 2198 / 1H9)</name>
    <dbReference type="NCBI Taxonomy" id="768066"/>
    <lineage>
        <taxon>Bacteria</taxon>
        <taxon>Pseudomonadati</taxon>
        <taxon>Pseudomonadota</taxon>
        <taxon>Gammaproteobacteria</taxon>
        <taxon>Oceanospirillales</taxon>
        <taxon>Halomonadaceae</taxon>
        <taxon>Halomonas</taxon>
    </lineage>
</organism>
<dbReference type="EMBL" id="AY437838">
    <property type="protein sequence ID" value="AAR91791.1"/>
    <property type="molecule type" value="Genomic_DNA"/>
</dbReference>
<dbReference type="EMBL" id="FN869568">
    <property type="protein sequence ID" value="CBV41255.1"/>
    <property type="molecule type" value="Genomic_DNA"/>
</dbReference>
<dbReference type="RefSeq" id="WP_013331127.1">
    <property type="nucleotide sequence ID" value="NC_014532.2"/>
</dbReference>
<dbReference type="SMR" id="E1V6C6"/>
<dbReference type="STRING" id="768066.HELO_1372"/>
<dbReference type="GeneID" id="91008581"/>
<dbReference type="KEGG" id="hel:HELO_1372"/>
<dbReference type="eggNOG" id="COG0569">
    <property type="taxonomic scope" value="Bacteria"/>
</dbReference>
<dbReference type="HOGENOM" id="CLU_046525_0_2_6"/>
<dbReference type="OrthoDB" id="9775180at2"/>
<dbReference type="Proteomes" id="UP000008707">
    <property type="component" value="Chromosome"/>
</dbReference>
<dbReference type="GO" id="GO:0005886">
    <property type="term" value="C:plasma membrane"/>
    <property type="evidence" value="ECO:0007669"/>
    <property type="project" value="UniProtKB-SubCell"/>
</dbReference>
<dbReference type="GO" id="GO:0015079">
    <property type="term" value="F:potassium ion transmembrane transporter activity"/>
    <property type="evidence" value="ECO:0007669"/>
    <property type="project" value="InterPro"/>
</dbReference>
<dbReference type="FunFam" id="3.30.70.1450:FF:000001">
    <property type="entry name" value="Trk system potassium transporter TrkA"/>
    <property type="match status" value="1"/>
</dbReference>
<dbReference type="FunFam" id="3.40.50.720:FF:000027">
    <property type="entry name" value="Trk system potassium transporter TrkA"/>
    <property type="match status" value="1"/>
</dbReference>
<dbReference type="FunFam" id="3.40.50.720:FF:000042">
    <property type="entry name" value="Trk system potassium transporter TrkA"/>
    <property type="match status" value="1"/>
</dbReference>
<dbReference type="Gene3D" id="3.40.50.720">
    <property type="entry name" value="NAD(P)-binding Rossmann-like Domain"/>
    <property type="match status" value="2"/>
</dbReference>
<dbReference type="Gene3D" id="3.30.70.1450">
    <property type="entry name" value="Regulator of K+ conductance, C-terminal domain"/>
    <property type="match status" value="2"/>
</dbReference>
<dbReference type="InterPro" id="IPR006036">
    <property type="entry name" value="K_uptake_TrkA"/>
</dbReference>
<dbReference type="InterPro" id="IPR036291">
    <property type="entry name" value="NAD(P)-bd_dom_sf"/>
</dbReference>
<dbReference type="InterPro" id="IPR006037">
    <property type="entry name" value="RCK_C"/>
</dbReference>
<dbReference type="InterPro" id="IPR036721">
    <property type="entry name" value="RCK_C_sf"/>
</dbReference>
<dbReference type="InterPro" id="IPR003148">
    <property type="entry name" value="RCK_N"/>
</dbReference>
<dbReference type="InterPro" id="IPR050721">
    <property type="entry name" value="Trk_Ktr_HKT_K-transport"/>
</dbReference>
<dbReference type="NCBIfam" id="NF007030">
    <property type="entry name" value="PRK09496.1-1"/>
    <property type="match status" value="1"/>
</dbReference>
<dbReference type="NCBIfam" id="NF007031">
    <property type="entry name" value="PRK09496.1-2"/>
    <property type="match status" value="1"/>
</dbReference>
<dbReference type="NCBIfam" id="NF007032">
    <property type="entry name" value="PRK09496.1-4"/>
    <property type="match status" value="1"/>
</dbReference>
<dbReference type="NCBIfam" id="NF007039">
    <property type="entry name" value="PRK09496.3-2"/>
    <property type="match status" value="1"/>
</dbReference>
<dbReference type="PANTHER" id="PTHR43833">
    <property type="entry name" value="POTASSIUM CHANNEL PROTEIN 2-RELATED-RELATED"/>
    <property type="match status" value="1"/>
</dbReference>
<dbReference type="PANTHER" id="PTHR43833:SF5">
    <property type="entry name" value="TRK SYSTEM POTASSIUM UPTAKE PROTEIN TRKA"/>
    <property type="match status" value="1"/>
</dbReference>
<dbReference type="Pfam" id="PF02080">
    <property type="entry name" value="TrkA_C"/>
    <property type="match status" value="2"/>
</dbReference>
<dbReference type="Pfam" id="PF02254">
    <property type="entry name" value="TrkA_N"/>
    <property type="match status" value="2"/>
</dbReference>
<dbReference type="PRINTS" id="PR00335">
    <property type="entry name" value="KUPTAKETRKA"/>
</dbReference>
<dbReference type="SUPFAM" id="SSF51735">
    <property type="entry name" value="NAD(P)-binding Rossmann-fold domains"/>
    <property type="match status" value="2"/>
</dbReference>
<dbReference type="SUPFAM" id="SSF116726">
    <property type="entry name" value="TrkA C-terminal domain-like"/>
    <property type="match status" value="2"/>
</dbReference>
<dbReference type="PROSITE" id="PS51202">
    <property type="entry name" value="RCK_C"/>
    <property type="match status" value="2"/>
</dbReference>
<dbReference type="PROSITE" id="PS51201">
    <property type="entry name" value="RCK_N"/>
    <property type="match status" value="2"/>
</dbReference>
<accession>E1V6C6</accession>
<accession>Q6T3V8</accession>
<proteinExistence type="inferred from homology"/>
<name>TRKA_HALED</name>
<feature type="chain" id="PRO_0000430040" description="Trk system potassium uptake protein TrkA">
    <location>
        <begin position="1"/>
        <end position="457"/>
    </location>
</feature>
<feature type="domain" description="RCK N-terminal 1" evidence="3">
    <location>
        <begin position="1"/>
        <end position="122"/>
    </location>
</feature>
<feature type="domain" description="RCK C-terminal 1" evidence="4">
    <location>
        <begin position="142"/>
        <end position="226"/>
    </location>
</feature>
<feature type="domain" description="RCK N-terminal 2" evidence="3">
    <location>
        <begin position="231"/>
        <end position="347"/>
    </location>
</feature>
<feature type="domain" description="RCK C-terminal 2" evidence="4">
    <location>
        <begin position="367"/>
        <end position="452"/>
    </location>
</feature>
<feature type="binding site" description="in other chain" evidence="1">
    <location>
        <begin position="7"/>
        <end position="11"/>
    </location>
    <ligand>
        <name>NAD(+)</name>
        <dbReference type="ChEBI" id="CHEBI:57540"/>
        <label>1</label>
        <note>ligand shared between dimeric partners</note>
    </ligand>
</feature>
<feature type="binding site" description="in other chain" evidence="1">
    <location>
        <position position="30"/>
    </location>
    <ligand>
        <name>NAD(+)</name>
        <dbReference type="ChEBI" id="CHEBI:57540"/>
        <label>1</label>
        <note>ligand shared between dimeric partners</note>
    </ligand>
</feature>
<feature type="binding site" description="in other chain" evidence="1">
    <location>
        <begin position="73"/>
        <end position="74"/>
    </location>
    <ligand>
        <name>NAD(+)</name>
        <dbReference type="ChEBI" id="CHEBI:57540"/>
        <label>1</label>
        <note>ligand shared between dimeric partners</note>
    </ligand>
</feature>
<feature type="binding site" evidence="1">
    <location>
        <position position="98"/>
    </location>
    <ligand>
        <name>NAD(+)</name>
        <dbReference type="ChEBI" id="CHEBI:57540"/>
        <label>1</label>
        <note>ligand shared between dimeric partners</note>
    </ligand>
</feature>
<feature type="binding site" evidence="2">
    <location>
        <begin position="233"/>
        <end position="261"/>
    </location>
    <ligand>
        <name>NAD(+)</name>
        <dbReference type="ChEBI" id="CHEBI:57540"/>
        <label>2</label>
    </ligand>
</feature>